<feature type="peptide" id="PRO_0000233918" description="Kappa-theraphotoxin-Pg1a" evidence="1">
    <location>
        <begin position="1"/>
        <end position="36"/>
    </location>
</feature>
<feature type="disulfide bond" evidence="3">
    <location>
        <begin position="4"/>
        <end position="19"/>
    </location>
</feature>
<feature type="disulfide bond" evidence="3">
    <location>
        <begin position="11"/>
        <end position="24"/>
    </location>
</feature>
<feature type="disulfide bond" evidence="3">
    <location>
        <begin position="18"/>
        <end position="31"/>
    </location>
</feature>
<feature type="strand" evidence="6">
    <location>
        <begin position="7"/>
        <end position="10"/>
    </location>
</feature>
<feature type="strand" evidence="6">
    <location>
        <begin position="26"/>
        <end position="32"/>
    </location>
</feature>
<protein>
    <recommendedName>
        <fullName>Kappa-theraphotoxin-Pg1a</fullName>
        <shortName>Kappa-TRTX-Pg1a</shortName>
    </recommendedName>
    <alternativeName>
        <fullName>Guangxitoxin-1E</fullName>
        <shortName>GxTx1E</shortName>
    </alternativeName>
</protein>
<keyword id="KW-0002">3D-structure</keyword>
<keyword id="KW-0903">Direct protein sequencing</keyword>
<keyword id="KW-1015">Disulfide bond</keyword>
<keyword id="KW-0872">Ion channel impairing toxin</keyword>
<keyword id="KW-0960">Knottin</keyword>
<keyword id="KW-0528">Neurotoxin</keyword>
<keyword id="KW-0632">Potassium channel impairing toxin</keyword>
<keyword id="KW-0964">Secreted</keyword>
<keyword id="KW-0800">Toxin</keyword>
<keyword id="KW-1220">Voltage-gated potassium channel impairing toxin</keyword>
<organism>
    <name type="scientific">Chilobrachys guangxiensis</name>
    <name type="common">Chinese earth tiger tarantula</name>
    <name type="synonym">Chilobrachys jingzhao</name>
    <dbReference type="NCBI Taxonomy" id="278060"/>
    <lineage>
        <taxon>Eukaryota</taxon>
        <taxon>Metazoa</taxon>
        <taxon>Ecdysozoa</taxon>
        <taxon>Arthropoda</taxon>
        <taxon>Chelicerata</taxon>
        <taxon>Arachnida</taxon>
        <taxon>Araneae</taxon>
        <taxon>Mygalomorphae</taxon>
        <taxon>Theraphosidae</taxon>
        <taxon>Chilobrachys</taxon>
    </lineage>
</organism>
<accession>P84835</accession>
<proteinExistence type="evidence at protein level"/>
<sequence length="36" mass="3955">EGECGGFWWKCGSGKPACCPKYVCSPKWGLCNFPMP</sequence>
<comment type="function">
    <text evidence="1 2 4">Gating modifier of Kv2.1/KCNB1 (IC(50)=5.1 nM), Kv2.2/KCNB2 and Kv4.3/KCND3 channels (IC(50)=39 nM). Acts by shifting the channel activation to more depolarized potentials by stabilizing the resting conformation of the voltage sensor. It completely inhibits opening of the Kv2.1/KCNB1 channel at negative membrane voltages and dramatically shifts channel activation to positive voltages. May act by partitioning into lipid membranes and then by binding the voltage sensor paddle of the channel from a place within the membrane.</text>
</comment>
<comment type="subcellular location">
    <subcellularLocation>
        <location evidence="1">Secreted</location>
    </subcellularLocation>
</comment>
<comment type="tissue specificity">
    <text evidence="1">Expressed by the venom gland.</text>
</comment>
<comment type="domain">
    <text>The presence of a 'disulfide through disulfide knot' structurally defines this protein as a knottin.</text>
</comment>
<comment type="mass spectrometry" mass="3948.0" error="0.39" method="MALDI" evidence="1"/>
<comment type="miscellaneous">
    <text>Negative results: has no significant effects on Kv1.2/KCNA2, Kv1.3/KCNA3, Kv1.5/KCNA5, Kv3.2/KCNC2, Cav1.2/CACNA1C, Cav2.2/CACNA1B, Nav1.5/SCN5A, Nav1.7/SCN9A or Nav1.8/SCN10A channels.</text>
</comment>
<comment type="similarity">
    <text evidence="5">Belongs to the neurotoxin 10 (Hwtx-1) family. 44 (Jztx-4) subfamily.</text>
</comment>
<evidence type="ECO:0000269" key="1">
    <source>
    </source>
</evidence>
<evidence type="ECO:0000269" key="2">
    <source>
    </source>
</evidence>
<evidence type="ECO:0000269" key="3">
    <source>
    </source>
</evidence>
<evidence type="ECO:0000269" key="4">
    <source>
    </source>
</evidence>
<evidence type="ECO:0000305" key="5"/>
<evidence type="ECO:0007829" key="6">
    <source>
        <dbReference type="PDB" id="2WH9"/>
    </source>
</evidence>
<reference key="1">
    <citation type="journal article" date="2006" name="Diabetes">
        <title>Blockers of the delayed-rectifier potassium current in pancreatic beta-cells enhance glucose-dependent insulin secretion.</title>
        <authorList>
            <person name="Herrington J."/>
            <person name="Zhou Y.-P."/>
            <person name="Bugianesi R.M."/>
            <person name="Dulski P.M."/>
            <person name="Feng Y."/>
            <person name="Warren V.A."/>
            <person name="Smith M.M."/>
            <person name="Kohler M.G."/>
            <person name="Garsky V.M."/>
            <person name="Sanchez M."/>
            <person name="Wagner M."/>
            <person name="Raphaelli K."/>
            <person name="Banerjee P."/>
            <person name="Ahaghotu C."/>
            <person name="Wunderler D."/>
            <person name="Priest B.T."/>
            <person name="Mehl J.T."/>
            <person name="Garcia M.L."/>
            <person name="McManus O.B."/>
            <person name="Kaczorowski G.J."/>
            <person name="Slaughter R.S."/>
        </authorList>
    </citation>
    <scope>PROTEIN SEQUENCE</scope>
    <scope>FUNCTION</scope>
    <scope>SUBCELLULAR LOCATION</scope>
    <scope>TISSUE SPECIFICITY</scope>
    <scope>MASS SPECTROMETRY</scope>
    <source>
        <tissue>Venom</tissue>
    </source>
</reference>
<reference key="2">
    <citation type="journal article" date="2006" name="Diabetes">
        <authorList>
            <person name="Herrington J."/>
            <person name="Zhou Y.-P."/>
            <person name="Bugianesi R.M."/>
            <person name="Dulski P.M."/>
            <person name="Feng Y."/>
            <person name="Warren V.A."/>
            <person name="Smith M.M."/>
            <person name="Kohler M.G."/>
            <person name="Garsky V.M."/>
            <person name="Sanchez M."/>
            <person name="Wagner M."/>
            <person name="Raphaelli K."/>
            <person name="Banerjee P."/>
            <person name="Ahaghotu C."/>
            <person name="Wunderler D."/>
            <person name="Priest B.T."/>
            <person name="Mehl J.T."/>
            <person name="Garcia M.L."/>
            <person name="McManus O.B."/>
            <person name="Kaczorowski G.J."/>
            <person name="Slaughter R.S."/>
        </authorList>
    </citation>
    <scope>ERRATUM OF PUBMED:16567526</scope>
</reference>
<reference key="3">
    <citation type="journal article" date="2007" name="Toxicon">
        <title>Gating modifier peptides as probes of pancreatic beta-cell physiology.</title>
        <authorList>
            <person name="Herrington J."/>
        </authorList>
    </citation>
    <scope>FUNCTION ON PANCREATIC BETA-CELLS</scope>
</reference>
<reference key="4">
    <citation type="journal article" date="2009" name="Channels">
        <title>A KV2.1 gating modifier binding assay suitable for high throughput screening.</title>
        <authorList>
            <person name="Schmalhofer W.A."/>
            <person name="Ratliff K.S."/>
            <person name="Weinglass A."/>
            <person name="Kaczorowski G.J."/>
            <person name="Garcia M.L."/>
            <person name="Herrington J."/>
        </authorList>
    </citation>
    <scope>FUNCTION</scope>
</reference>
<reference key="5">
    <citation type="journal article" date="2010" name="Biochemistry">
        <title>Solution structure of GxTX-1E, a high-affinity tarantula toxin interacting with voltage sensors in Kv2.1 potassium channels.</title>
        <authorList>
            <person name="Lee S."/>
            <person name="Milescu M."/>
            <person name="Jung H.H."/>
            <person name="Lee J.Y."/>
            <person name="Bae C.H."/>
            <person name="Lee C.W."/>
            <person name="Kim H.H."/>
            <person name="Swartz K.J."/>
            <person name="Kim J.I."/>
        </authorList>
    </citation>
    <scope>STRUCTURE BY NMR</scope>
    <scope>SYNTHESIS</scope>
    <scope>DISULFIDE BOND</scope>
</reference>
<dbReference type="PDB" id="2WH9">
    <property type="method" value="NMR"/>
    <property type="chains" value="A=1-36"/>
</dbReference>
<dbReference type="PDBsum" id="2WH9"/>
<dbReference type="BMRB" id="P84835"/>
<dbReference type="SMR" id="P84835"/>
<dbReference type="ArachnoServer" id="AS000323">
    <property type="toxin name" value="kappa-theraphotoxin-Pg1a"/>
</dbReference>
<dbReference type="EvolutionaryTrace" id="P84835"/>
<dbReference type="GO" id="GO:0005576">
    <property type="term" value="C:extracellular region"/>
    <property type="evidence" value="ECO:0007669"/>
    <property type="project" value="UniProtKB-SubCell"/>
</dbReference>
<dbReference type="GO" id="GO:0008200">
    <property type="term" value="F:ion channel inhibitor activity"/>
    <property type="evidence" value="ECO:0007669"/>
    <property type="project" value="InterPro"/>
</dbReference>
<dbReference type="GO" id="GO:0015459">
    <property type="term" value="F:potassium channel regulator activity"/>
    <property type="evidence" value="ECO:0007669"/>
    <property type="project" value="UniProtKB-KW"/>
</dbReference>
<dbReference type="GO" id="GO:0090729">
    <property type="term" value="F:toxin activity"/>
    <property type="evidence" value="ECO:0007669"/>
    <property type="project" value="UniProtKB-KW"/>
</dbReference>
<dbReference type="InterPro" id="IPR011696">
    <property type="entry name" value="Huwentoxin-1"/>
</dbReference>
<dbReference type="Pfam" id="PF07740">
    <property type="entry name" value="Toxin_12"/>
    <property type="match status" value="1"/>
</dbReference>
<dbReference type="SUPFAM" id="SSF57059">
    <property type="entry name" value="omega toxin-like"/>
    <property type="match status" value="1"/>
</dbReference>
<name>TXG1E_CHIGU</name>